<sequence>MIRQRTLKEIVKTTGVGLHSGRKVTLTLRPAAANTGIIYRRTDVNPPVDFPADPASVRDTMLCTALVNDQGVRISTVEHLNAALAGMGIDNAIIEVDAPEIPIMDGSASPFVYLLQQAGIQTLNAPKRFIRIKKPVRIEDGDKWAEFVPFNGFRMDFEIEFNHPAIDGDDQRLVFDFSSQGFVKEISRARTFGFMRDIEYLQSQNLCLGGSFDCAIVLDDYRILNEEGLRFDNEFVTHKVLDAIGDLYMAGHAIVGEFRAYKSGHGLNNQLLRAVLADQEAWEWATFEEEVGSPVAFAEPNMVLA</sequence>
<proteinExistence type="inferred from homology"/>
<feature type="chain" id="PRO_1000072212" description="UDP-3-O-acyl-N-acetylglucosamine deacetylase">
    <location>
        <begin position="1"/>
        <end position="305"/>
    </location>
</feature>
<feature type="active site" description="Proton donor" evidence="1">
    <location>
        <position position="265"/>
    </location>
</feature>
<feature type="binding site" evidence="1">
    <location>
        <position position="79"/>
    </location>
    <ligand>
        <name>Zn(2+)</name>
        <dbReference type="ChEBI" id="CHEBI:29105"/>
    </ligand>
</feature>
<feature type="binding site" evidence="1">
    <location>
        <position position="238"/>
    </location>
    <ligand>
        <name>Zn(2+)</name>
        <dbReference type="ChEBI" id="CHEBI:29105"/>
    </ligand>
</feature>
<feature type="binding site" evidence="1">
    <location>
        <position position="242"/>
    </location>
    <ligand>
        <name>Zn(2+)</name>
        <dbReference type="ChEBI" id="CHEBI:29105"/>
    </ligand>
</feature>
<keyword id="KW-0378">Hydrolase</keyword>
<keyword id="KW-0441">Lipid A biosynthesis</keyword>
<keyword id="KW-0444">Lipid biosynthesis</keyword>
<keyword id="KW-0443">Lipid metabolism</keyword>
<keyword id="KW-0479">Metal-binding</keyword>
<keyword id="KW-0862">Zinc</keyword>
<dbReference type="EC" id="3.5.1.108" evidence="1"/>
<dbReference type="EMBL" id="CP000627">
    <property type="protein sequence ID" value="ABQ22015.1"/>
    <property type="molecule type" value="Genomic_DNA"/>
</dbReference>
<dbReference type="EMBL" id="CP001235">
    <property type="protein sequence ID" value="ACP10500.1"/>
    <property type="molecule type" value="Genomic_DNA"/>
</dbReference>
<dbReference type="RefSeq" id="WP_000621097.1">
    <property type="nucleotide sequence ID" value="NZ_JAACZH010000010.1"/>
</dbReference>
<dbReference type="SMR" id="A5F5P3"/>
<dbReference type="GeneID" id="88783207"/>
<dbReference type="KEGG" id="vco:VC0395_A1974"/>
<dbReference type="KEGG" id="vcr:VC395_2511"/>
<dbReference type="PATRIC" id="fig|345073.21.peg.2415"/>
<dbReference type="eggNOG" id="COG0774">
    <property type="taxonomic scope" value="Bacteria"/>
</dbReference>
<dbReference type="HOGENOM" id="CLU_046528_1_0_6"/>
<dbReference type="OrthoDB" id="9802746at2"/>
<dbReference type="UniPathway" id="UPA00359">
    <property type="reaction ID" value="UER00478"/>
</dbReference>
<dbReference type="Proteomes" id="UP000000249">
    <property type="component" value="Chromosome 2"/>
</dbReference>
<dbReference type="GO" id="GO:0016020">
    <property type="term" value="C:membrane"/>
    <property type="evidence" value="ECO:0007669"/>
    <property type="project" value="GOC"/>
</dbReference>
<dbReference type="GO" id="GO:0046872">
    <property type="term" value="F:metal ion binding"/>
    <property type="evidence" value="ECO:0007669"/>
    <property type="project" value="UniProtKB-KW"/>
</dbReference>
<dbReference type="GO" id="GO:0103117">
    <property type="term" value="F:UDP-3-O-acyl-N-acetylglucosamine deacetylase activity"/>
    <property type="evidence" value="ECO:0007669"/>
    <property type="project" value="UniProtKB-UniRule"/>
</dbReference>
<dbReference type="GO" id="GO:0009245">
    <property type="term" value="P:lipid A biosynthetic process"/>
    <property type="evidence" value="ECO:0007669"/>
    <property type="project" value="UniProtKB-UniRule"/>
</dbReference>
<dbReference type="FunFam" id="3.30.1700.10:FF:000001">
    <property type="entry name" value="UDP-3-O-acyl-N-acetylglucosamine deacetylase"/>
    <property type="match status" value="1"/>
</dbReference>
<dbReference type="FunFam" id="3.30.230.20:FF:000001">
    <property type="entry name" value="UDP-3-O-acyl-N-acetylglucosamine deacetylase"/>
    <property type="match status" value="1"/>
</dbReference>
<dbReference type="Gene3D" id="3.30.230.20">
    <property type="entry name" value="lpxc deacetylase, domain 1"/>
    <property type="match status" value="1"/>
</dbReference>
<dbReference type="Gene3D" id="3.30.1700.10">
    <property type="entry name" value="lpxc deacetylase, domain 2"/>
    <property type="match status" value="1"/>
</dbReference>
<dbReference type="HAMAP" id="MF_00388">
    <property type="entry name" value="LpxC"/>
    <property type="match status" value="1"/>
</dbReference>
<dbReference type="InterPro" id="IPR020568">
    <property type="entry name" value="Ribosomal_Su5_D2-typ_SF"/>
</dbReference>
<dbReference type="InterPro" id="IPR004463">
    <property type="entry name" value="UDP-acyl_GlcNac_deAcase"/>
</dbReference>
<dbReference type="InterPro" id="IPR011334">
    <property type="entry name" value="UDP-acyl_GlcNac_deAcase_C"/>
</dbReference>
<dbReference type="InterPro" id="IPR015870">
    <property type="entry name" value="UDP-acyl_N-AcGlcN_deAcase_N"/>
</dbReference>
<dbReference type="NCBIfam" id="TIGR00325">
    <property type="entry name" value="lpxC"/>
    <property type="match status" value="1"/>
</dbReference>
<dbReference type="PANTHER" id="PTHR33694">
    <property type="entry name" value="UDP-3-O-ACYL-N-ACETYLGLUCOSAMINE DEACETYLASE 1, MITOCHONDRIAL-RELATED"/>
    <property type="match status" value="1"/>
</dbReference>
<dbReference type="PANTHER" id="PTHR33694:SF1">
    <property type="entry name" value="UDP-3-O-ACYL-N-ACETYLGLUCOSAMINE DEACETYLASE 1, MITOCHONDRIAL-RELATED"/>
    <property type="match status" value="1"/>
</dbReference>
<dbReference type="Pfam" id="PF03331">
    <property type="entry name" value="LpxC"/>
    <property type="match status" value="1"/>
</dbReference>
<dbReference type="SUPFAM" id="SSF54211">
    <property type="entry name" value="Ribosomal protein S5 domain 2-like"/>
    <property type="match status" value="2"/>
</dbReference>
<evidence type="ECO:0000255" key="1">
    <source>
        <dbReference type="HAMAP-Rule" id="MF_00388"/>
    </source>
</evidence>
<protein>
    <recommendedName>
        <fullName evidence="1">UDP-3-O-acyl-N-acetylglucosamine deacetylase</fullName>
        <shortName evidence="1">UDP-3-O-acyl-GlcNAc deacetylase</shortName>
        <ecNumber evidence="1">3.5.1.108</ecNumber>
    </recommendedName>
    <alternativeName>
        <fullName evidence="1">UDP-3-O-[R-3-hydroxymyristoyl]-N-acetylglucosamine deacetylase</fullName>
    </alternativeName>
</protein>
<comment type="function">
    <text evidence="1">Catalyzes the hydrolysis of UDP-3-O-myristoyl-N-acetylglucosamine to form UDP-3-O-myristoylglucosamine and acetate, the committed step in lipid A biosynthesis.</text>
</comment>
<comment type="catalytic activity">
    <reaction evidence="1">
        <text>a UDP-3-O-[(3R)-3-hydroxyacyl]-N-acetyl-alpha-D-glucosamine + H2O = a UDP-3-O-[(3R)-3-hydroxyacyl]-alpha-D-glucosamine + acetate</text>
        <dbReference type="Rhea" id="RHEA:67816"/>
        <dbReference type="ChEBI" id="CHEBI:15377"/>
        <dbReference type="ChEBI" id="CHEBI:30089"/>
        <dbReference type="ChEBI" id="CHEBI:137740"/>
        <dbReference type="ChEBI" id="CHEBI:173225"/>
        <dbReference type="EC" id="3.5.1.108"/>
    </reaction>
</comment>
<comment type="cofactor">
    <cofactor evidence="1">
        <name>Zn(2+)</name>
        <dbReference type="ChEBI" id="CHEBI:29105"/>
    </cofactor>
</comment>
<comment type="pathway">
    <text evidence="1">Glycolipid biosynthesis; lipid IV(A) biosynthesis; lipid IV(A) from (3R)-3-hydroxytetradecanoyl-[acyl-carrier-protein] and UDP-N-acetyl-alpha-D-glucosamine: step 2/6.</text>
</comment>
<comment type="similarity">
    <text evidence="1">Belongs to the LpxC family.</text>
</comment>
<reference key="1">
    <citation type="submission" date="2007-03" db="EMBL/GenBank/DDBJ databases">
        <authorList>
            <person name="Heidelberg J."/>
        </authorList>
    </citation>
    <scope>NUCLEOTIDE SEQUENCE [LARGE SCALE GENOMIC DNA]</scope>
    <source>
        <strain>ATCC 39541 / Classical Ogawa 395 / O395</strain>
    </source>
</reference>
<reference key="2">
    <citation type="journal article" date="2008" name="PLoS ONE">
        <title>A recalibrated molecular clock and independent origins for the cholera pandemic clones.</title>
        <authorList>
            <person name="Feng L."/>
            <person name="Reeves P.R."/>
            <person name="Lan R."/>
            <person name="Ren Y."/>
            <person name="Gao C."/>
            <person name="Zhou Z."/>
            <person name="Ren Y."/>
            <person name="Cheng J."/>
            <person name="Wang W."/>
            <person name="Wang J."/>
            <person name="Qian W."/>
            <person name="Li D."/>
            <person name="Wang L."/>
        </authorList>
    </citation>
    <scope>NUCLEOTIDE SEQUENCE [LARGE SCALE GENOMIC DNA]</scope>
    <source>
        <strain>ATCC 39541 / Classical Ogawa 395 / O395</strain>
    </source>
</reference>
<organism>
    <name type="scientific">Vibrio cholerae serotype O1 (strain ATCC 39541 / Classical Ogawa 395 / O395)</name>
    <dbReference type="NCBI Taxonomy" id="345073"/>
    <lineage>
        <taxon>Bacteria</taxon>
        <taxon>Pseudomonadati</taxon>
        <taxon>Pseudomonadota</taxon>
        <taxon>Gammaproteobacteria</taxon>
        <taxon>Vibrionales</taxon>
        <taxon>Vibrionaceae</taxon>
        <taxon>Vibrio</taxon>
    </lineage>
</organism>
<accession>A5F5P3</accession>
<accession>C3M4B8</accession>
<name>LPXC_VIBC3</name>
<gene>
    <name evidence="1" type="primary">lpxC</name>
    <name type="synonym">envA</name>
    <name type="ordered locus">VC0395_A1974</name>
    <name type="ordered locus">VC395_2511</name>
</gene>